<proteinExistence type="inferred from homology"/>
<name>UREF_MYCVP</name>
<feature type="chain" id="PRO_1000145126" description="Urease accessory protein UreF">
    <location>
        <begin position="1"/>
        <end position="214"/>
    </location>
</feature>
<feature type="region of interest" description="Disordered" evidence="2">
    <location>
        <begin position="70"/>
        <end position="95"/>
    </location>
</feature>
<feature type="compositionally biased region" description="Low complexity" evidence="2">
    <location>
        <begin position="83"/>
        <end position="95"/>
    </location>
</feature>
<sequence length="214" mass="21890">MSSLATLLVLSDSRLPTGGHVHSGGVEEAVSSGLVVDLATLRAYLTRRIRTSGLVTASLAAAVHRGSLPAAAGEAGDAETDARTPSPAARAASRAQGRGLVRLARRVWPEQDWDGLGATPHLAVAAGVAGRAGGLAPDHTALSVVYTTMTGSATAAQRLLALDPGDVAAVTFALSPLCEHTAAEAAKELADLSDPLLDVLAQRHLERERPLFAS</sequence>
<comment type="function">
    <text evidence="1">Required for maturation of urease via the functional incorporation of the urease nickel metallocenter.</text>
</comment>
<comment type="subunit">
    <text evidence="1">UreD, UreF and UreG form a complex that acts as a GTP-hydrolysis-dependent molecular chaperone, activating the urease apoprotein by helping to assemble the nickel containing metallocenter of UreC. The UreE protein probably delivers the nickel.</text>
</comment>
<comment type="subcellular location">
    <subcellularLocation>
        <location evidence="1">Cytoplasm</location>
    </subcellularLocation>
</comment>
<comment type="similarity">
    <text evidence="1">Belongs to the UreF family.</text>
</comment>
<reference key="1">
    <citation type="submission" date="2006-12" db="EMBL/GenBank/DDBJ databases">
        <title>Complete sequence of Mycobacterium vanbaalenii PYR-1.</title>
        <authorList>
            <consortium name="US DOE Joint Genome Institute"/>
            <person name="Copeland A."/>
            <person name="Lucas S."/>
            <person name="Lapidus A."/>
            <person name="Barry K."/>
            <person name="Detter J.C."/>
            <person name="Glavina del Rio T."/>
            <person name="Hammon N."/>
            <person name="Israni S."/>
            <person name="Dalin E."/>
            <person name="Tice H."/>
            <person name="Pitluck S."/>
            <person name="Singan V."/>
            <person name="Schmutz J."/>
            <person name="Larimer F."/>
            <person name="Land M."/>
            <person name="Hauser L."/>
            <person name="Kyrpides N."/>
            <person name="Anderson I.J."/>
            <person name="Miller C."/>
            <person name="Richardson P."/>
        </authorList>
    </citation>
    <scope>NUCLEOTIDE SEQUENCE [LARGE SCALE GENOMIC DNA]</scope>
    <source>
        <strain>DSM 7251 / JCM 13017 / BCRC 16820 / KCTC 9966 / NRRL B-24157 / PYR-1</strain>
    </source>
</reference>
<accession>A1T9N3</accession>
<organism>
    <name type="scientific">Mycolicibacterium vanbaalenii (strain DSM 7251 / JCM 13017 / BCRC 16820 / KCTC 9966 / NRRL B-24157 / PYR-1)</name>
    <name type="common">Mycobacterium vanbaalenii</name>
    <dbReference type="NCBI Taxonomy" id="350058"/>
    <lineage>
        <taxon>Bacteria</taxon>
        <taxon>Bacillati</taxon>
        <taxon>Actinomycetota</taxon>
        <taxon>Actinomycetes</taxon>
        <taxon>Mycobacteriales</taxon>
        <taxon>Mycobacteriaceae</taxon>
        <taxon>Mycolicibacterium</taxon>
    </lineage>
</organism>
<protein>
    <recommendedName>
        <fullName evidence="1">Urease accessory protein UreF</fullName>
    </recommendedName>
</protein>
<gene>
    <name evidence="1" type="primary">ureF</name>
    <name type="ordered locus">Mvan_3081</name>
</gene>
<keyword id="KW-0143">Chaperone</keyword>
<keyword id="KW-0963">Cytoplasm</keyword>
<keyword id="KW-0996">Nickel insertion</keyword>
<dbReference type="EMBL" id="CP000511">
    <property type="protein sequence ID" value="ABM13883.1"/>
    <property type="molecule type" value="Genomic_DNA"/>
</dbReference>
<dbReference type="RefSeq" id="WP_011780288.1">
    <property type="nucleotide sequence ID" value="NC_008726.1"/>
</dbReference>
<dbReference type="SMR" id="A1T9N3"/>
<dbReference type="STRING" id="350058.Mvan_3081"/>
<dbReference type="KEGG" id="mva:Mvan_3081"/>
<dbReference type="eggNOG" id="COG0830">
    <property type="taxonomic scope" value="Bacteria"/>
</dbReference>
<dbReference type="HOGENOM" id="CLU_049215_3_0_11"/>
<dbReference type="Proteomes" id="UP000009159">
    <property type="component" value="Chromosome"/>
</dbReference>
<dbReference type="GO" id="GO:0005737">
    <property type="term" value="C:cytoplasm"/>
    <property type="evidence" value="ECO:0007669"/>
    <property type="project" value="UniProtKB-SubCell"/>
</dbReference>
<dbReference type="GO" id="GO:0016151">
    <property type="term" value="F:nickel cation binding"/>
    <property type="evidence" value="ECO:0007669"/>
    <property type="project" value="UniProtKB-UniRule"/>
</dbReference>
<dbReference type="Gene3D" id="1.10.4190.10">
    <property type="entry name" value="Urease accessory protein UreF"/>
    <property type="match status" value="1"/>
</dbReference>
<dbReference type="HAMAP" id="MF_01385">
    <property type="entry name" value="UreF"/>
    <property type="match status" value="1"/>
</dbReference>
<dbReference type="InterPro" id="IPR002639">
    <property type="entry name" value="UreF"/>
</dbReference>
<dbReference type="InterPro" id="IPR038277">
    <property type="entry name" value="UreF_sf"/>
</dbReference>
<dbReference type="PANTHER" id="PTHR33620">
    <property type="entry name" value="UREASE ACCESSORY PROTEIN F"/>
    <property type="match status" value="1"/>
</dbReference>
<dbReference type="PANTHER" id="PTHR33620:SF1">
    <property type="entry name" value="UREASE ACCESSORY PROTEIN F"/>
    <property type="match status" value="1"/>
</dbReference>
<dbReference type="Pfam" id="PF01730">
    <property type="entry name" value="UreF"/>
    <property type="match status" value="1"/>
</dbReference>
<dbReference type="PIRSF" id="PIRSF009467">
    <property type="entry name" value="Ureas_acces_UreF"/>
    <property type="match status" value="1"/>
</dbReference>
<evidence type="ECO:0000255" key="1">
    <source>
        <dbReference type="HAMAP-Rule" id="MF_01385"/>
    </source>
</evidence>
<evidence type="ECO:0000256" key="2">
    <source>
        <dbReference type="SAM" id="MobiDB-lite"/>
    </source>
</evidence>